<comment type="function">
    <text evidence="1">Catalyzes the synthesis of GMP from XMP.</text>
</comment>
<comment type="catalytic activity">
    <reaction evidence="1">
        <text>XMP + L-glutamine + ATP + H2O = GMP + L-glutamate + AMP + diphosphate + 2 H(+)</text>
        <dbReference type="Rhea" id="RHEA:11680"/>
        <dbReference type="ChEBI" id="CHEBI:15377"/>
        <dbReference type="ChEBI" id="CHEBI:15378"/>
        <dbReference type="ChEBI" id="CHEBI:29985"/>
        <dbReference type="ChEBI" id="CHEBI:30616"/>
        <dbReference type="ChEBI" id="CHEBI:33019"/>
        <dbReference type="ChEBI" id="CHEBI:57464"/>
        <dbReference type="ChEBI" id="CHEBI:58115"/>
        <dbReference type="ChEBI" id="CHEBI:58359"/>
        <dbReference type="ChEBI" id="CHEBI:456215"/>
        <dbReference type="EC" id="6.3.5.2"/>
    </reaction>
</comment>
<comment type="pathway">
    <text evidence="1">Purine metabolism; GMP biosynthesis; GMP from XMP (L-Gln route): step 1/1.</text>
</comment>
<comment type="subunit">
    <text evidence="1">Homodimer.</text>
</comment>
<accession>A2BTY4</accession>
<evidence type="ECO:0000255" key="1">
    <source>
        <dbReference type="HAMAP-Rule" id="MF_00344"/>
    </source>
</evidence>
<reference key="1">
    <citation type="journal article" date="2007" name="PLoS Genet.">
        <title>Patterns and implications of gene gain and loss in the evolution of Prochlorococcus.</title>
        <authorList>
            <person name="Kettler G.C."/>
            <person name="Martiny A.C."/>
            <person name="Huang K."/>
            <person name="Zucker J."/>
            <person name="Coleman M.L."/>
            <person name="Rodrigue S."/>
            <person name="Chen F."/>
            <person name="Lapidus A."/>
            <person name="Ferriera S."/>
            <person name="Johnson J."/>
            <person name="Steglich C."/>
            <person name="Church G.M."/>
            <person name="Richardson P."/>
            <person name="Chisholm S.W."/>
        </authorList>
    </citation>
    <scope>NUCLEOTIDE SEQUENCE [LARGE SCALE GENOMIC DNA]</scope>
    <source>
        <strain>MIT 9515</strain>
    </source>
</reference>
<gene>
    <name evidence="1" type="primary">guaA</name>
    <name type="ordered locus">P9515_00361</name>
</gene>
<sequence length="528" mass="59559">MGKNLLKKERDPSILILDFGSQYSELIARRIREANVFSLVVSNFISTKEIQDINPQGIILSGGPNSVYEDNAPKCDQNIFNLGIPVLGICYGMQLMVKELGGTVTPANNRSEYGRAPIKIDFESDLLSSVKDKSIMWMSHGDSINHLPNGFIKIAHTENTLHAAISNKEKKLFGVQFHPEVIHSEYGMTVIKNFVYSISKCKADWNTETFLEETIPRIKEQVGDKKVLLALSGGVDSSTLAFLLNKAIGKQLTCMFIDQGFMRKGEPEFLMEFFAKKFHIKVEYINARERFLHKLNGVTDPEEKRKIIGGEFIRVFEEESHRLGPFEYLAQGTLYPDVIESAGTNLDPKTGERIAVKIKSHHNVGGLPKDLQFKLVEPLRKLFKDEVRKLGNALGLPDEIIKRHPFPGPGLAIRILGEVSIEKLNCLRDADWIVRDEIKKAGLYNDIWQAFAVLLPVKTVGVMGDKRTYAWPVVLRCVSSEDGMTADWSRIPYETLERISNRIVNEVAQVNRVVFDITSKPPGTIEWE</sequence>
<organism>
    <name type="scientific">Prochlorococcus marinus (strain MIT 9515)</name>
    <dbReference type="NCBI Taxonomy" id="167542"/>
    <lineage>
        <taxon>Bacteria</taxon>
        <taxon>Bacillati</taxon>
        <taxon>Cyanobacteriota</taxon>
        <taxon>Cyanophyceae</taxon>
        <taxon>Synechococcales</taxon>
        <taxon>Prochlorococcaceae</taxon>
        <taxon>Prochlorococcus</taxon>
    </lineage>
</organism>
<proteinExistence type="inferred from homology"/>
<name>GUAA_PROM5</name>
<keyword id="KW-0067">ATP-binding</keyword>
<keyword id="KW-0315">Glutamine amidotransferase</keyword>
<keyword id="KW-0332">GMP biosynthesis</keyword>
<keyword id="KW-0436">Ligase</keyword>
<keyword id="KW-0547">Nucleotide-binding</keyword>
<keyword id="KW-0658">Purine biosynthesis</keyword>
<protein>
    <recommendedName>
        <fullName evidence="1">GMP synthase [glutamine-hydrolyzing]</fullName>
        <ecNumber evidence="1">6.3.5.2</ecNumber>
    </recommendedName>
    <alternativeName>
        <fullName evidence="1">GMP synthetase</fullName>
    </alternativeName>
    <alternativeName>
        <fullName evidence="1">Glutamine amidotransferase</fullName>
    </alternativeName>
</protein>
<dbReference type="EC" id="6.3.5.2" evidence="1"/>
<dbReference type="EMBL" id="CP000552">
    <property type="protein sequence ID" value="ABM71245.1"/>
    <property type="molecule type" value="Genomic_DNA"/>
</dbReference>
<dbReference type="RefSeq" id="WP_011819362.1">
    <property type="nucleotide sequence ID" value="NC_008817.1"/>
</dbReference>
<dbReference type="SMR" id="A2BTY4"/>
<dbReference type="STRING" id="167542.P9515_00361"/>
<dbReference type="MEROPS" id="C26.957"/>
<dbReference type="GeneID" id="60200758"/>
<dbReference type="KEGG" id="pmc:P9515_00361"/>
<dbReference type="eggNOG" id="COG0519">
    <property type="taxonomic scope" value="Bacteria"/>
</dbReference>
<dbReference type="HOGENOM" id="CLU_014340_0_5_3"/>
<dbReference type="OrthoDB" id="9802219at2"/>
<dbReference type="UniPathway" id="UPA00189">
    <property type="reaction ID" value="UER00296"/>
</dbReference>
<dbReference type="Proteomes" id="UP000001589">
    <property type="component" value="Chromosome"/>
</dbReference>
<dbReference type="GO" id="GO:0005829">
    <property type="term" value="C:cytosol"/>
    <property type="evidence" value="ECO:0007669"/>
    <property type="project" value="TreeGrafter"/>
</dbReference>
<dbReference type="GO" id="GO:0005524">
    <property type="term" value="F:ATP binding"/>
    <property type="evidence" value="ECO:0007669"/>
    <property type="project" value="UniProtKB-UniRule"/>
</dbReference>
<dbReference type="GO" id="GO:0003921">
    <property type="term" value="F:GMP synthase activity"/>
    <property type="evidence" value="ECO:0007669"/>
    <property type="project" value="InterPro"/>
</dbReference>
<dbReference type="CDD" id="cd01742">
    <property type="entry name" value="GATase1_GMP_Synthase"/>
    <property type="match status" value="1"/>
</dbReference>
<dbReference type="CDD" id="cd01997">
    <property type="entry name" value="GMP_synthase_C"/>
    <property type="match status" value="1"/>
</dbReference>
<dbReference type="FunFam" id="3.30.300.10:FF:000002">
    <property type="entry name" value="GMP synthase [glutamine-hydrolyzing]"/>
    <property type="match status" value="1"/>
</dbReference>
<dbReference type="FunFam" id="3.40.50.620:FF:000001">
    <property type="entry name" value="GMP synthase [glutamine-hydrolyzing]"/>
    <property type="match status" value="1"/>
</dbReference>
<dbReference type="FunFam" id="3.40.50.880:FF:000001">
    <property type="entry name" value="GMP synthase [glutamine-hydrolyzing]"/>
    <property type="match status" value="1"/>
</dbReference>
<dbReference type="Gene3D" id="3.30.300.10">
    <property type="match status" value="1"/>
</dbReference>
<dbReference type="Gene3D" id="3.40.50.880">
    <property type="match status" value="1"/>
</dbReference>
<dbReference type="Gene3D" id="3.40.50.620">
    <property type="entry name" value="HUPs"/>
    <property type="match status" value="1"/>
</dbReference>
<dbReference type="HAMAP" id="MF_00344">
    <property type="entry name" value="GMP_synthase"/>
    <property type="match status" value="1"/>
</dbReference>
<dbReference type="InterPro" id="IPR029062">
    <property type="entry name" value="Class_I_gatase-like"/>
</dbReference>
<dbReference type="InterPro" id="IPR017926">
    <property type="entry name" value="GATASE"/>
</dbReference>
<dbReference type="InterPro" id="IPR001674">
    <property type="entry name" value="GMP_synth_C"/>
</dbReference>
<dbReference type="InterPro" id="IPR004739">
    <property type="entry name" value="GMP_synth_GATase"/>
</dbReference>
<dbReference type="InterPro" id="IPR022955">
    <property type="entry name" value="GMP_synthase"/>
</dbReference>
<dbReference type="InterPro" id="IPR025777">
    <property type="entry name" value="GMPS_ATP_PPase_dom"/>
</dbReference>
<dbReference type="InterPro" id="IPR022310">
    <property type="entry name" value="NAD/GMP_synthase"/>
</dbReference>
<dbReference type="InterPro" id="IPR014729">
    <property type="entry name" value="Rossmann-like_a/b/a_fold"/>
</dbReference>
<dbReference type="NCBIfam" id="TIGR00884">
    <property type="entry name" value="guaA_Cterm"/>
    <property type="match status" value="1"/>
</dbReference>
<dbReference type="NCBIfam" id="TIGR00888">
    <property type="entry name" value="guaA_Nterm"/>
    <property type="match status" value="1"/>
</dbReference>
<dbReference type="NCBIfam" id="NF000848">
    <property type="entry name" value="PRK00074.1"/>
    <property type="match status" value="1"/>
</dbReference>
<dbReference type="PANTHER" id="PTHR11922:SF2">
    <property type="entry name" value="GMP SYNTHASE [GLUTAMINE-HYDROLYZING]"/>
    <property type="match status" value="1"/>
</dbReference>
<dbReference type="PANTHER" id="PTHR11922">
    <property type="entry name" value="GMP SYNTHASE-RELATED"/>
    <property type="match status" value="1"/>
</dbReference>
<dbReference type="Pfam" id="PF00117">
    <property type="entry name" value="GATase"/>
    <property type="match status" value="1"/>
</dbReference>
<dbReference type="Pfam" id="PF00958">
    <property type="entry name" value="GMP_synt_C"/>
    <property type="match status" value="1"/>
</dbReference>
<dbReference type="Pfam" id="PF02540">
    <property type="entry name" value="NAD_synthase"/>
    <property type="match status" value="1"/>
</dbReference>
<dbReference type="PRINTS" id="PR00097">
    <property type="entry name" value="ANTSNTHASEII"/>
</dbReference>
<dbReference type="PRINTS" id="PR00099">
    <property type="entry name" value="CPSGATASE"/>
</dbReference>
<dbReference type="PRINTS" id="PR00096">
    <property type="entry name" value="GATASE"/>
</dbReference>
<dbReference type="SUPFAM" id="SSF52402">
    <property type="entry name" value="Adenine nucleotide alpha hydrolases-like"/>
    <property type="match status" value="1"/>
</dbReference>
<dbReference type="SUPFAM" id="SSF52317">
    <property type="entry name" value="Class I glutamine amidotransferase-like"/>
    <property type="match status" value="1"/>
</dbReference>
<dbReference type="SUPFAM" id="SSF54810">
    <property type="entry name" value="GMP synthetase C-terminal dimerisation domain"/>
    <property type="match status" value="1"/>
</dbReference>
<dbReference type="PROSITE" id="PS51273">
    <property type="entry name" value="GATASE_TYPE_1"/>
    <property type="match status" value="1"/>
</dbReference>
<dbReference type="PROSITE" id="PS51553">
    <property type="entry name" value="GMPS_ATP_PPASE"/>
    <property type="match status" value="1"/>
</dbReference>
<feature type="chain" id="PRO_1000120361" description="GMP synthase [glutamine-hydrolyzing]">
    <location>
        <begin position="1"/>
        <end position="528"/>
    </location>
</feature>
<feature type="domain" description="Glutamine amidotransferase type-1" evidence="1">
    <location>
        <begin position="13"/>
        <end position="204"/>
    </location>
</feature>
<feature type="domain" description="GMPS ATP-PPase" evidence="1">
    <location>
        <begin position="205"/>
        <end position="403"/>
    </location>
</feature>
<feature type="active site" description="Nucleophile" evidence="1">
    <location>
        <position position="90"/>
    </location>
</feature>
<feature type="active site" evidence="1">
    <location>
        <position position="178"/>
    </location>
</feature>
<feature type="active site" evidence="1">
    <location>
        <position position="180"/>
    </location>
</feature>
<feature type="binding site" evidence="1">
    <location>
        <begin position="232"/>
        <end position="238"/>
    </location>
    <ligand>
        <name>ATP</name>
        <dbReference type="ChEBI" id="CHEBI:30616"/>
    </ligand>
</feature>